<protein>
    <recommendedName>
        <fullName evidence="5">Potassium channel toxin gamma-KTx 4.12</fullName>
    </recommendedName>
    <alternativeName>
        <fullName evidence="4">CsEKerg1</fullName>
    </alternativeName>
</protein>
<name>KGX4C_CENSC</name>
<comment type="function">
    <text evidence="3">Reversibly blocks Kv11/ERG potassium channels. Is less toxic than ergtoxin (AC Q86QT3).</text>
</comment>
<comment type="subcellular location">
    <subcellularLocation>
        <location evidence="3">Secreted</location>
    </subcellularLocation>
</comment>
<comment type="tissue specificity">
    <text evidence="6">Expressed by the venom gland.</text>
</comment>
<comment type="domain">
    <text evidence="1">The presence of a 'disulfide through disulfide knot' structurally defines this protein as a knottin.</text>
</comment>
<comment type="domain">
    <text evidence="2">Has the CSalpha/beta fold, which comprises one or two short alpha helices connected to anti-parallel beta-sheets stabilized by three or four disulfide bonds.</text>
</comment>
<comment type="mass spectrometry"/>
<comment type="similarity">
    <text evidence="6">Belongs to the ergtoxin family. Gamma-KTx 4 subfamily.</text>
</comment>
<proteinExistence type="evidence at protein level"/>
<organism>
    <name type="scientific">Centruroides sculpturatus</name>
    <name type="common">Arizona bark scorpion</name>
    <dbReference type="NCBI Taxonomy" id="218467"/>
    <lineage>
        <taxon>Eukaryota</taxon>
        <taxon>Metazoa</taxon>
        <taxon>Ecdysozoa</taxon>
        <taxon>Arthropoda</taxon>
        <taxon>Chelicerata</taxon>
        <taxon>Arachnida</taxon>
        <taxon>Scorpiones</taxon>
        <taxon>Buthida</taxon>
        <taxon>Buthoidea</taxon>
        <taxon>Buthidae</taxon>
        <taxon>Centruroides</taxon>
    </lineage>
</organism>
<reference key="1">
    <citation type="journal article" date="2002" name="Toxicon">
        <title>A short-chain peptide toxin isolated from Centruroides sculpturatus scorpion venom inhibits ether-a-go-go-related gene K(+) channels.</title>
        <authorList>
            <person name="Nastainczyk W."/>
            <person name="Meves H."/>
            <person name="Watt D.D."/>
        </authorList>
    </citation>
    <scope>PROTEIN SEQUENCE</scope>
    <scope>MASS SPECTROMETRY</scope>
    <scope>SUBCELLULAR LOCATION</scope>
    <scope>FUNCTION</scope>
    <source>
        <tissue>Venom</tissue>
    </source>
</reference>
<reference key="2">
    <citation type="journal article" date="2002" name="FEBS Lett.">
        <title>A large number of novel Ergtoxin-like genes and ERG K+-channels blocking peptides from scorpions of the genus Centruroides.</title>
        <authorList>
            <person name="Corona M."/>
            <person name="Gurrola G.B."/>
            <person name="Merino E."/>
            <person name="Cassulini R.R."/>
            <person name="Valdez-Cruz N.A."/>
            <person name="Garcia B."/>
            <person name="Ramirez-Dominguez M.E."/>
            <person name="Coronas F.I."/>
            <person name="Zamudio F.Z."/>
            <person name="Wanke E."/>
            <person name="Possani L.D."/>
        </authorList>
    </citation>
    <scope>NOMENCLATURE</scope>
</reference>
<accession>P59940</accession>
<dbReference type="SMR" id="P59940"/>
<dbReference type="GO" id="GO:0005576">
    <property type="term" value="C:extracellular region"/>
    <property type="evidence" value="ECO:0007669"/>
    <property type="project" value="UniProtKB-SubCell"/>
</dbReference>
<dbReference type="GO" id="GO:0019870">
    <property type="term" value="F:potassium channel inhibitor activity"/>
    <property type="evidence" value="ECO:0007669"/>
    <property type="project" value="InterPro"/>
</dbReference>
<dbReference type="GO" id="GO:0090729">
    <property type="term" value="F:toxin activity"/>
    <property type="evidence" value="ECO:0007669"/>
    <property type="project" value="UniProtKB-KW"/>
</dbReference>
<dbReference type="Gene3D" id="3.30.30.10">
    <property type="entry name" value="Knottin, scorpion toxin-like"/>
    <property type="match status" value="1"/>
</dbReference>
<dbReference type="InterPro" id="IPR012622">
    <property type="entry name" value="Ergtoxin"/>
</dbReference>
<dbReference type="InterPro" id="IPR036574">
    <property type="entry name" value="Scorpion_toxin-like_sf"/>
</dbReference>
<dbReference type="Pfam" id="PF08086">
    <property type="entry name" value="Toxin_17"/>
    <property type="match status" value="1"/>
</dbReference>
<dbReference type="SUPFAM" id="SSF57095">
    <property type="entry name" value="Scorpion toxin-like"/>
    <property type="match status" value="1"/>
</dbReference>
<dbReference type="PROSITE" id="PS60026">
    <property type="entry name" value="ERGTX"/>
    <property type="match status" value="1"/>
</dbReference>
<feature type="chain" id="PRO_0000066859" description="Potassium channel toxin gamma-KTx 4.12">
    <location>
        <begin position="1"/>
        <end position="43"/>
    </location>
</feature>
<feature type="disulfide bond" evidence="2">
    <location>
        <begin position="5"/>
        <end position="23"/>
    </location>
</feature>
<feature type="disulfide bond" evidence="2">
    <location>
        <begin position="11"/>
        <end position="34"/>
    </location>
</feature>
<feature type="disulfide bond" evidence="2">
    <location>
        <begin position="20"/>
        <end position="39"/>
    </location>
</feature>
<feature type="disulfide bond" evidence="2">
    <location>
        <begin position="24"/>
        <end position="41"/>
    </location>
</feature>
<keyword id="KW-0903">Direct protein sequencing</keyword>
<keyword id="KW-1015">Disulfide bond</keyword>
<keyword id="KW-0872">Ion channel impairing toxin</keyword>
<keyword id="KW-0960">Knottin</keyword>
<keyword id="KW-0528">Neurotoxin</keyword>
<keyword id="KW-0632">Potassium channel impairing toxin</keyword>
<keyword id="KW-0964">Secreted</keyword>
<keyword id="KW-0800">Toxin</keyword>
<keyword id="KW-1220">Voltage-gated potassium channel impairing toxin</keyword>
<evidence type="ECO:0000250" key="1"/>
<evidence type="ECO:0000250" key="2">
    <source>
        <dbReference type="UniProtKB" id="Q86QT3"/>
    </source>
</evidence>
<evidence type="ECO:0000269" key="3">
    <source>
    </source>
</evidence>
<evidence type="ECO:0000303" key="4">
    <source>
    </source>
</evidence>
<evidence type="ECO:0000303" key="5">
    <source>
    </source>
</evidence>
<evidence type="ECO:0000305" key="6"/>
<sequence>ERDSCVEKSKCGKYGYYGQCDECCKKAGDRAGTCVYYKCKCNP</sequence>